<gene>
    <name evidence="5" type="ORF">HMPREF0351_12196</name>
</gene>
<proteinExistence type="evidence at protein level"/>
<protein>
    <recommendedName>
        <fullName evidence="4">Probable ketoamine kinase HMPREF0351_12196</fullName>
        <ecNumber evidence="3">2.7.1.-</ecNumber>
    </recommendedName>
</protein>
<dbReference type="EC" id="2.7.1.-" evidence="3"/>
<dbReference type="EMBL" id="CP003583">
    <property type="protein sequence ID" value="AFK59820.1"/>
    <property type="molecule type" value="Genomic_DNA"/>
</dbReference>
<dbReference type="RefSeq" id="WP_002287963.1">
    <property type="nucleotide sequence ID" value="NC_017960.1"/>
</dbReference>
<dbReference type="RefSeq" id="YP_006376802.1">
    <property type="nucleotide sequence ID" value="NC_017960.1"/>
</dbReference>
<dbReference type="SMR" id="Q3XZZ9"/>
<dbReference type="KEGG" id="efu:HMPREF0351_12196"/>
<dbReference type="HOGENOM" id="CLU_036517_0_1_9"/>
<dbReference type="Proteomes" id="UP000005269">
    <property type="component" value="Chromosome"/>
</dbReference>
<dbReference type="GO" id="GO:0005524">
    <property type="term" value="F:ATP binding"/>
    <property type="evidence" value="ECO:0007669"/>
    <property type="project" value="UniProtKB-KW"/>
</dbReference>
<dbReference type="GO" id="GO:0016301">
    <property type="term" value="F:kinase activity"/>
    <property type="evidence" value="ECO:0007669"/>
    <property type="project" value="UniProtKB-KW"/>
</dbReference>
<dbReference type="GO" id="GO:0016773">
    <property type="term" value="F:phosphotransferase activity, alcohol group as acceptor"/>
    <property type="evidence" value="ECO:0000314"/>
    <property type="project" value="UniProtKB"/>
</dbReference>
<dbReference type="GO" id="GO:0102193">
    <property type="term" value="F:protein-ribulosamine 3-kinase activity"/>
    <property type="evidence" value="ECO:0007669"/>
    <property type="project" value="RHEA"/>
</dbReference>
<dbReference type="Gene3D" id="3.90.1200.10">
    <property type="match status" value="1"/>
</dbReference>
<dbReference type="Gene3D" id="3.30.200.20">
    <property type="entry name" value="Phosphorylase Kinase, domain 1"/>
    <property type="match status" value="1"/>
</dbReference>
<dbReference type="InterPro" id="IPR016477">
    <property type="entry name" value="Fructo-/Ketosamine-3-kinase"/>
</dbReference>
<dbReference type="InterPro" id="IPR011009">
    <property type="entry name" value="Kinase-like_dom_sf"/>
</dbReference>
<dbReference type="PANTHER" id="PTHR12149">
    <property type="entry name" value="FRUCTOSAMINE 3 KINASE-RELATED PROTEIN"/>
    <property type="match status" value="1"/>
</dbReference>
<dbReference type="PANTHER" id="PTHR12149:SF8">
    <property type="entry name" value="PROTEIN-RIBULOSAMINE 3-KINASE"/>
    <property type="match status" value="1"/>
</dbReference>
<dbReference type="Pfam" id="PF03881">
    <property type="entry name" value="Fructosamin_kin"/>
    <property type="match status" value="1"/>
</dbReference>
<dbReference type="PIRSF" id="PIRSF006221">
    <property type="entry name" value="Ketosamine-3-kinase"/>
    <property type="match status" value="1"/>
</dbReference>
<dbReference type="SUPFAM" id="SSF56112">
    <property type="entry name" value="Protein kinase-like (PK-like)"/>
    <property type="match status" value="1"/>
</dbReference>
<keyword id="KW-0067">ATP-binding</keyword>
<keyword id="KW-0418">Kinase</keyword>
<keyword id="KW-0547">Nucleotide-binding</keyword>
<keyword id="KW-1185">Reference proteome</keyword>
<keyword id="KW-0808">Transferase</keyword>
<sequence>MDIQTVLSDLKLNGKVIPVVGGDVNQTYRIKTEHRAYFLKIHPNVKKGFFEAEVDGLKELSAFVRVPDTYMLGETSEGAYLLMEWIEPGKGDQRDLAAALANLHQQTAPQFGFRKDNYLGTLVQKNSFEEDWWTFFFKDRLESQISLAEETNRWNVQRQEKYLRFKERVLKSVEPKKITPRLLHGDLWSGNVFFDQQGHPVFVDPAVSYGNREQDIAMSQLFGGFRPEFLDAYQTIFPLEKGWKDRLPIYQLYYLLAHLNMFGESYGSQVDQLLENF</sequence>
<comment type="function">
    <text evidence="3">Ketoamine kinase that phosphorylates ketoamines, such as erythruloselysine, erythrulosecadaverine, ribuloselysine and ribulosecadaverine, on the third carbon of the sugar moiety to generate ketoamine 3-phosphate (PubMed:17681011). Has higher activity on free lysine (erythruloselysine and ribuloselysine), than on ribuloselysine and erythruloselysine residues on glycated proteins (PubMed:17681011).</text>
</comment>
<comment type="catalytic activity">
    <reaction evidence="3">
        <text>N(6)-(D-ribulosyl)-L-lysine + ATP = N(6)-(3-O-phospho-D-ribulosyl)-L-lysine + ADP + H(+)</text>
        <dbReference type="Rhea" id="RHEA:61400"/>
        <dbReference type="ChEBI" id="CHEBI:15378"/>
        <dbReference type="ChEBI" id="CHEBI:30616"/>
        <dbReference type="ChEBI" id="CHEBI:144590"/>
        <dbReference type="ChEBI" id="CHEBI:144611"/>
        <dbReference type="ChEBI" id="CHEBI:456216"/>
    </reaction>
    <physiologicalReaction direction="left-to-right" evidence="3">
        <dbReference type="Rhea" id="RHEA:61401"/>
    </physiologicalReaction>
</comment>
<comment type="catalytic activity">
    <reaction evidence="3">
        <text>N-(D-ribulosyl)-cadaverine + ATP = N-(3-O-phospho-D-ribulosyl)-cadaverine + ADP + H(+)</text>
        <dbReference type="Rhea" id="RHEA:61404"/>
        <dbReference type="ChEBI" id="CHEBI:15378"/>
        <dbReference type="ChEBI" id="CHEBI:30616"/>
        <dbReference type="ChEBI" id="CHEBI:144612"/>
        <dbReference type="ChEBI" id="CHEBI:144614"/>
        <dbReference type="ChEBI" id="CHEBI:456216"/>
    </reaction>
    <physiologicalReaction direction="left-to-right" evidence="3">
        <dbReference type="Rhea" id="RHEA:61405"/>
    </physiologicalReaction>
</comment>
<comment type="catalytic activity">
    <reaction evidence="3">
        <text>N(6)-(D-erythrulosyl)-L-lysine + ATP = N(6)-(3-O-phospho-D-erythrulosyl)-L-lysine + ADP + H(+)</text>
        <dbReference type="Rhea" id="RHEA:61408"/>
        <dbReference type="ChEBI" id="CHEBI:15378"/>
        <dbReference type="ChEBI" id="CHEBI:30616"/>
        <dbReference type="ChEBI" id="CHEBI:144617"/>
        <dbReference type="ChEBI" id="CHEBI:144618"/>
        <dbReference type="ChEBI" id="CHEBI:456216"/>
    </reaction>
    <physiologicalReaction direction="left-to-right" evidence="3">
        <dbReference type="Rhea" id="RHEA:61409"/>
    </physiologicalReaction>
</comment>
<comment type="catalytic activity">
    <reaction evidence="3">
        <text>N-(D-erythrulosyl)-cadaverine + ATP = N-(3-O-phospho-D-erythrulosyl)-cadaverine + ADP + H(+)</text>
        <dbReference type="Rhea" id="RHEA:61412"/>
        <dbReference type="ChEBI" id="CHEBI:15378"/>
        <dbReference type="ChEBI" id="CHEBI:30616"/>
        <dbReference type="ChEBI" id="CHEBI:144619"/>
        <dbReference type="ChEBI" id="CHEBI:144620"/>
        <dbReference type="ChEBI" id="CHEBI:456216"/>
    </reaction>
    <physiologicalReaction direction="left-to-right" evidence="3">
        <dbReference type="Rhea" id="RHEA:61413"/>
    </physiologicalReaction>
</comment>
<comment type="catalytic activity">
    <reaction evidence="3">
        <text>N(6)-D-ribulosyl-L-lysyl-[protein] + ATP = N(6)-(3-O-phospho-D-ribulosyl)-L-lysyl-[protein] + ADP + H(+)</text>
        <dbReference type="Rhea" id="RHEA:48432"/>
        <dbReference type="Rhea" id="RHEA-COMP:12103"/>
        <dbReference type="Rhea" id="RHEA-COMP:12104"/>
        <dbReference type="ChEBI" id="CHEBI:15378"/>
        <dbReference type="ChEBI" id="CHEBI:30616"/>
        <dbReference type="ChEBI" id="CHEBI:90418"/>
        <dbReference type="ChEBI" id="CHEBI:90420"/>
        <dbReference type="ChEBI" id="CHEBI:456216"/>
    </reaction>
    <physiologicalReaction direction="left-to-right" evidence="3">
        <dbReference type="Rhea" id="RHEA:48433"/>
    </physiologicalReaction>
</comment>
<comment type="catalytic activity">
    <reaction evidence="3">
        <text>N(6)-(D-erythrulosyl)-L-lysyl-[protein] + ATP = N(6)-(3-O-phospho-D-erythrulosyl)-L-lysyl-[protein] + ADP + H(+)</text>
        <dbReference type="Rhea" id="RHEA:61396"/>
        <dbReference type="Rhea" id="RHEA-COMP:15794"/>
        <dbReference type="Rhea" id="RHEA-COMP:15799"/>
        <dbReference type="ChEBI" id="CHEBI:15378"/>
        <dbReference type="ChEBI" id="CHEBI:30616"/>
        <dbReference type="ChEBI" id="CHEBI:144587"/>
        <dbReference type="ChEBI" id="CHEBI:144624"/>
        <dbReference type="ChEBI" id="CHEBI:456216"/>
    </reaction>
    <physiologicalReaction direction="left-to-right" evidence="3">
        <dbReference type="Rhea" id="RHEA:61397"/>
    </physiologicalReaction>
</comment>
<comment type="biophysicochemical properties">
    <kinetics>
        <KM evidence="3">185 uM for free ribuloselysine</KM>
        <KM evidence="3">44 uM for free ribulosecadaverine</KM>
        <KM evidence="3">15 uM for free erythruloselysine</KM>
        <KM evidence="3">34 uM for free erythrulosecadaverine</KM>
        <Vmax evidence="3">730.0 nmol/min/mg enzyme with free ribuloselysine as substrate</Vmax>
        <Vmax evidence="3">1340.0 nmol/min/mg enzyme with free ribulosecadaverine as substrate</Vmax>
        <Vmax evidence="3">480.0 nmol/min/mg enzyme with free erythruloselysine as substrate</Vmax>
        <Vmax evidence="3">460.0 nmol/min/mg enzyme with free erythrulosecadaverine as substrate</Vmax>
        <Vmax evidence="3">40.0 nmol/min/mg enzyme with ribuloselysyl-protein (lysozyme) as substrate</Vmax>
        <Vmax evidence="3">80.0 nmol/min/mg enzyme with erythruloselysyl-protein (lysozyme) as substrate</Vmax>
    </kinetics>
</comment>
<comment type="similarity">
    <text evidence="4">Belongs to the fructosamine kinase family.</text>
</comment>
<feature type="chain" id="PRO_0000448385" description="Probable ketoamine kinase HMPREF0351_12196">
    <location>
        <begin position="1"/>
        <end position="277"/>
    </location>
</feature>
<feature type="active site" description="Proton acceptor" evidence="1">
    <location>
        <position position="186"/>
    </location>
</feature>
<feature type="binding site" evidence="2">
    <location>
        <begin position="84"/>
        <end position="86"/>
    </location>
    <ligand>
        <name>ATP</name>
        <dbReference type="ChEBI" id="CHEBI:30616"/>
    </ligand>
</feature>
<name>KT3K_ENTFD</name>
<evidence type="ECO:0000250" key="1">
    <source>
        <dbReference type="UniProtKB" id="P9WI99"/>
    </source>
</evidence>
<evidence type="ECO:0000250" key="2">
    <source>
        <dbReference type="UniProtKB" id="Q9HA64"/>
    </source>
</evidence>
<evidence type="ECO:0000269" key="3">
    <source>
    </source>
</evidence>
<evidence type="ECO:0000305" key="4"/>
<evidence type="ECO:0000312" key="5">
    <source>
        <dbReference type="EMBL" id="AFK59820.1"/>
    </source>
</evidence>
<organism>
    <name type="scientific">Enterococcus faecium (strain ATCC BAA-472 / TX0016 / DO)</name>
    <dbReference type="NCBI Taxonomy" id="333849"/>
    <lineage>
        <taxon>Bacteria</taxon>
        <taxon>Bacillati</taxon>
        <taxon>Bacillota</taxon>
        <taxon>Bacilli</taxon>
        <taxon>Lactobacillales</taxon>
        <taxon>Enterococcaceae</taxon>
        <taxon>Enterococcus</taxon>
    </lineage>
</organism>
<accession>Q3XZZ9</accession>
<reference key="1">
    <citation type="journal article" date="2012" name="BMC Microbiol.">
        <title>Complete genome sequence of Enterococcus faecium strain TX16 and comparative genomic analysis of Enterococcus faecium genomes.</title>
        <authorList>
            <person name="Qin X."/>
            <person name="Galloway-Pena J.R."/>
            <person name="Sillanpaa J."/>
            <person name="Hyeob Roh J."/>
            <person name="Nallapareddy S.R."/>
            <person name="Chowdhury S."/>
            <person name="Bourgogne A."/>
            <person name="Choudhury T."/>
            <person name="Munzy D.M."/>
            <person name="Buhay C.J."/>
            <person name="Ding Y."/>
            <person name="Dugan-Rocha S."/>
            <person name="Liu W."/>
            <person name="Kovar C."/>
            <person name="Sodergren E."/>
            <person name="Highlander S."/>
            <person name="Petrosino J.F."/>
            <person name="Worley K.C."/>
            <person name="Gibbs R.A."/>
            <person name="Weinstock G.M."/>
            <person name="Murray B.E."/>
        </authorList>
    </citation>
    <scope>NUCLEOTIDE SEQUENCE [LARGE SCALE GENOMIC DNA]</scope>
    <source>
        <strain>ATCC BAA-472 / TX0016 / DO</strain>
    </source>
</reference>
<reference key="2">
    <citation type="journal article" date="2007" name="FEBS J.">
        <title>Many fructosamine 3-kinase homologues in bacteria are ribulosamine/erythrulosamine 3-kinases potentially involved in protein deglycation.</title>
        <authorList>
            <person name="Gemayel R."/>
            <person name="Fortpied J."/>
            <person name="Rzem R."/>
            <person name="Vertommen D."/>
            <person name="Veiga-da-Cunha M."/>
            <person name="Van Schaftingen E."/>
        </authorList>
    </citation>
    <scope>FUNCTION</scope>
    <scope>CATALYTIC ACTIVITY</scope>
    <scope>BIOPHYSICOCHEMICAL PROPERTIES</scope>
</reference>